<name>DGAT1_ARATH</name>
<sequence length="520" mass="58986">MAILDSAGVTTVTENGGGEFVDLDRLRRRKSRSDSSNGLLLSGSDNNSPSDDVGAPADVRDRIDSVVNDDAQGTANLAGDNNGGGDNNGGGRGGGEGRGNADATFTYRPSVPAHRRARESPLSSDAIFKQSHAGLFNLCVVVLIAVNSRLIIENLMKYGWLIRTDFWFSSRSLRDWPLFMCCISLSIFPLAAFTVEKLVLQKYISEPVVIFLHIIITMTEVLYPVYVTLRCDSAFLSGVTLMLLTCIVWLKLVSYAHTSYDIRSLANAADKANPEVSYYVSLKSLAYFMVAPTLCYQPSYPRSACIRKGWVARQFAKLVIFTGFMGFIIEQYINPIVRNSKHPLKGDLLYAIERVLKLSVPNLYVWLCMFYCFFHLWLNILAELLCFGDREFYKDWWNAKSVGDYWRMWNMPVHKWMVRHIYFPCLRSKIPKTLAIIIAFLVSAVFHELCIAVPCRLFKLWAFLGIMFQVPLVFITNYLQERFGSTVGNMIFWFIFCIFGQPMCVLLYYHDLMNRKGSMS</sequence>
<protein>
    <recommendedName>
        <fullName evidence="22">Diacylglycerol O-acyltransferase 1</fullName>
        <shortName evidence="21">AtDGAT1</shortName>
        <ecNumber evidence="8">2.3.1.20</ecNumber>
    </recommendedName>
    <alternativeName>
        <fullName evidence="19">Protein TRIACYLGLYCEROL 1</fullName>
    </alternativeName>
</protein>
<feature type="chain" id="PRO_0000398613" description="Diacylglycerol O-acyltransferase 1">
    <location>
        <begin position="1"/>
        <end position="520"/>
    </location>
</feature>
<feature type="transmembrane region" description="Helical" evidence="2">
    <location>
        <begin position="126"/>
        <end position="146"/>
    </location>
</feature>
<feature type="transmembrane region" description="Helical" evidence="2">
    <location>
        <begin position="176"/>
        <end position="196"/>
    </location>
</feature>
<feature type="transmembrane region" description="Helical" evidence="2">
    <location>
        <begin position="207"/>
        <end position="227"/>
    </location>
</feature>
<feature type="transmembrane region" description="Helical" evidence="2">
    <location>
        <begin position="233"/>
        <end position="253"/>
    </location>
</feature>
<feature type="transmembrane region" description="Helical" evidence="2">
    <location>
        <begin position="276"/>
        <end position="296"/>
    </location>
</feature>
<feature type="transmembrane region" description="Helical" evidence="2">
    <location>
        <begin position="317"/>
        <end position="337"/>
    </location>
</feature>
<feature type="transmembrane region" description="Helical" evidence="2">
    <location>
        <begin position="365"/>
        <end position="385"/>
    </location>
</feature>
<feature type="transmembrane region" description="Helical" evidence="2">
    <location>
        <begin position="434"/>
        <end position="454"/>
    </location>
</feature>
<feature type="transmembrane region" description="Helical" evidence="2">
    <location>
        <begin position="457"/>
        <end position="477"/>
    </location>
</feature>
<feature type="transmembrane region" description="Helical" evidence="2">
    <location>
        <begin position="487"/>
        <end position="507"/>
    </location>
</feature>
<feature type="region of interest" description="Disordered" evidence="3">
    <location>
        <begin position="28"/>
        <end position="57"/>
    </location>
</feature>
<feature type="region of interest" description="Disordered" evidence="3">
    <location>
        <begin position="72"/>
        <end position="116"/>
    </location>
</feature>
<feature type="short sequence motif" description="FYXDWWN motif" evidence="1">
    <location>
        <begin position="392"/>
        <end position="398"/>
    </location>
</feature>
<feature type="compositionally biased region" description="Low complexity" evidence="3">
    <location>
        <begin position="34"/>
        <end position="54"/>
    </location>
</feature>
<feature type="compositionally biased region" description="Gly residues" evidence="3">
    <location>
        <begin position="81"/>
        <end position="98"/>
    </location>
</feature>
<feature type="active site" evidence="1">
    <location>
        <position position="447"/>
    </location>
</feature>
<feature type="mutagenesis site" description="In AS11; strong reduction of enzymatic activity and delayed seed development." evidence="5">
    <original>Q</original>
    <variation>QSHAGLFNLCVVVLIAVNSRLIIENLMK</variation>
    <location>
        <position position="130"/>
    </location>
</feature>
<keyword id="KW-0012">Acyltransferase</keyword>
<keyword id="KW-0150">Chloroplast</keyword>
<keyword id="KW-0256">Endoplasmic reticulum</keyword>
<keyword id="KW-0319">Glycerol metabolism</keyword>
<keyword id="KW-0444">Lipid biosynthesis</keyword>
<keyword id="KW-0443">Lipid metabolism</keyword>
<keyword id="KW-0472">Membrane</keyword>
<keyword id="KW-0934">Plastid</keyword>
<keyword id="KW-1185">Reference proteome</keyword>
<keyword id="KW-0808">Transferase</keyword>
<keyword id="KW-0812">Transmembrane</keyword>
<keyword id="KW-1133">Transmembrane helix</keyword>
<comment type="function">
    <text evidence="5 6 7 9 10 13 14 15">Major contributor to triacylglycerol (TAG) synthesis and oil accumulation in seeds. Catalyzes the acylation of the sn-3 hydroxy group of sn-1,2-diacylglycerol using acyl-CoA (PubMed:10571850, PubMed:10580283, PubMed:10601854, PubMed:11402213, PubMed:12114588, PubMed:20040537, PubMed:20101470). Can use palmitoyl-CoA and oleoyl-CoA as substrates (PubMed:20101470). Can use oleoyl-CoA and linoleoyl-CoA as substrates. Has substrate preference for oleoyl-CoA compared to linoleoyl-CoA (PubMed:23770095). Has complementary functions with PDAT1 that are essential for triacylglycerol synthesis and normal development of both seeds and pollen (PubMed:20040537).</text>
</comment>
<comment type="catalytic activity">
    <reaction evidence="8">
        <text>an acyl-CoA + a 1,2-diacyl-sn-glycerol = a triacyl-sn-glycerol + CoA</text>
        <dbReference type="Rhea" id="RHEA:10868"/>
        <dbReference type="ChEBI" id="CHEBI:17815"/>
        <dbReference type="ChEBI" id="CHEBI:57287"/>
        <dbReference type="ChEBI" id="CHEBI:58342"/>
        <dbReference type="ChEBI" id="CHEBI:64615"/>
        <dbReference type="EC" id="2.3.1.20"/>
    </reaction>
    <physiologicalReaction direction="left-to-right" evidence="8">
        <dbReference type="Rhea" id="RHEA:10869"/>
    </physiologicalReaction>
</comment>
<comment type="catalytic activity">
    <reaction evidence="4">
        <text>1,2-di-(9Z-octadecenoyl)-sn-glycerol + (9Z)-octadecenoyl-CoA = 1,2,3-tri-(9Z-octadecenoyl)-glycerol + CoA</text>
        <dbReference type="Rhea" id="RHEA:38219"/>
        <dbReference type="ChEBI" id="CHEBI:52333"/>
        <dbReference type="ChEBI" id="CHEBI:53753"/>
        <dbReference type="ChEBI" id="CHEBI:57287"/>
        <dbReference type="ChEBI" id="CHEBI:57387"/>
    </reaction>
    <physiologicalReaction direction="left-to-right" evidence="4">
        <dbReference type="Rhea" id="RHEA:38220"/>
    </physiologicalReaction>
</comment>
<comment type="activity regulation">
    <text evidence="8">Partially inhibited by niacin.</text>
</comment>
<comment type="biophysicochemical properties">
    <phDependence>
        <text evidence="8">Optimum pH is between 6.75-7.25.</text>
    </phDependence>
</comment>
<comment type="pathway">
    <text>Glycerolipid metabolism; triacylglycerol biosynthesis.</text>
</comment>
<comment type="subunit">
    <text evidence="17">Interacts with LPCAT2 and LPAT2.</text>
</comment>
<comment type="subcellular location">
    <subcellularLocation>
        <location evidence="11">Plastid</location>
        <location evidence="11">Chloroplast membrane</location>
        <topology evidence="11">Multi-pass membrane protein</topology>
    </subcellularLocation>
    <subcellularLocation>
        <location evidence="11">Endoplasmic reticulum membrane</location>
        <topology evidence="11">Multi-pass membrane protein</topology>
    </subcellularLocation>
</comment>
<comment type="tissue specificity">
    <text evidence="5 12 13 14">Ubiquitous. Highest expression in young developing seeds.</text>
</comment>
<comment type="developmental stage">
    <text evidence="11 14">Peak of expression in seeds 15 days after flowering. Highly expressed in senescing leaves.</text>
</comment>
<comment type="induction">
    <text evidence="12 16">Up-regulated by glucose (PubMed:12825687). Induced by abscisic acid (ABA), jasmonate, salicylate, salt and osmotic stress (PubMed:23942253).</text>
</comment>
<comment type="disruption phenotype">
    <text evidence="13">Decreased oil content and modified size and shape of oil bodies.</text>
</comment>
<comment type="miscellaneous">
    <text>The AS11 mutant has a complete duplication of exon 2.</text>
</comment>
<comment type="miscellaneous">
    <text>DGAT1 deficiency alters carbohydrate metabolism.</text>
</comment>
<comment type="similarity">
    <text evidence="22">Belongs to the membrane-bound acyltransferase family. Sterol o-acyltransferase subfamily.</text>
</comment>
<dbReference type="EC" id="2.3.1.20" evidence="8"/>
<dbReference type="EMBL" id="AJ131831">
    <property type="protein sequence ID" value="CAB44774.1"/>
    <property type="molecule type" value="mRNA"/>
</dbReference>
<dbReference type="EMBL" id="AJ238008">
    <property type="protein sequence ID" value="CAB45373.1"/>
    <property type="molecule type" value="mRNA"/>
</dbReference>
<dbReference type="EMBL" id="AF051849">
    <property type="protein sequence ID" value="AAF19262.1"/>
    <property type="molecule type" value="mRNA"/>
</dbReference>
<dbReference type="EMBL" id="AC003058">
    <property type="protein sequence ID" value="AAM14875.1"/>
    <property type="molecule type" value="Genomic_DNA"/>
</dbReference>
<dbReference type="EMBL" id="AC005917">
    <property type="protein sequence ID" value="AAD10144.2"/>
    <property type="molecule type" value="Genomic_DNA"/>
</dbReference>
<dbReference type="EMBL" id="CP002685">
    <property type="protein sequence ID" value="AEC06882.1"/>
    <property type="molecule type" value="Genomic_DNA"/>
</dbReference>
<dbReference type="EMBL" id="AY054480">
    <property type="protein sequence ID" value="AAK96671.1"/>
    <property type="molecule type" value="mRNA"/>
</dbReference>
<dbReference type="EMBL" id="BT008883">
    <property type="protein sequence ID" value="AAP68322.1"/>
    <property type="molecule type" value="mRNA"/>
</dbReference>
<dbReference type="PIR" id="H84576">
    <property type="entry name" value="H84576"/>
</dbReference>
<dbReference type="PIR" id="T01293">
    <property type="entry name" value="T01293"/>
</dbReference>
<dbReference type="PIR" id="T01294">
    <property type="entry name" value="T01294"/>
</dbReference>
<dbReference type="PIR" id="T52584">
    <property type="entry name" value="T52584"/>
</dbReference>
<dbReference type="RefSeq" id="NP_179535.1">
    <property type="nucleotide sequence ID" value="NM_127503.3"/>
</dbReference>
<dbReference type="SMR" id="Q9SLD2"/>
<dbReference type="BioGRID" id="1819">
    <property type="interactions" value="1"/>
</dbReference>
<dbReference type="FunCoup" id="Q9SLD2">
    <property type="interactions" value="1623"/>
</dbReference>
<dbReference type="IntAct" id="Q9SLD2">
    <property type="interactions" value="1"/>
</dbReference>
<dbReference type="STRING" id="3702.Q9SLD2"/>
<dbReference type="SwissLipids" id="SLP:000001794"/>
<dbReference type="iPTMnet" id="Q9SLD2"/>
<dbReference type="PaxDb" id="3702-AT2G19450.1"/>
<dbReference type="ProteomicsDB" id="224212"/>
<dbReference type="EnsemblPlants" id="AT2G19450.1">
    <property type="protein sequence ID" value="AT2G19450.1"/>
    <property type="gene ID" value="AT2G19450"/>
</dbReference>
<dbReference type="GeneID" id="816464"/>
<dbReference type="Gramene" id="AT2G19450.1">
    <property type="protein sequence ID" value="AT2G19450.1"/>
    <property type="gene ID" value="AT2G19450"/>
</dbReference>
<dbReference type="KEGG" id="ath:AT2G19450"/>
<dbReference type="Araport" id="AT2G19450"/>
<dbReference type="TAIR" id="AT2G19450">
    <property type="gene designation" value="TAG1"/>
</dbReference>
<dbReference type="eggNOG" id="KOG0380">
    <property type="taxonomic scope" value="Eukaryota"/>
</dbReference>
<dbReference type="HOGENOM" id="CLU_018190_0_1_1"/>
<dbReference type="InParanoid" id="Q9SLD2"/>
<dbReference type="OMA" id="RCHDYRR"/>
<dbReference type="OrthoDB" id="10039049at2759"/>
<dbReference type="PhylomeDB" id="Q9SLD2"/>
<dbReference type="BioCyc" id="MetaCyc:MONOMER-2081"/>
<dbReference type="BRENDA" id="2.3.1.20">
    <property type="organism ID" value="399"/>
</dbReference>
<dbReference type="UniPathway" id="UPA00282"/>
<dbReference type="PRO" id="PR:Q9SLD2"/>
<dbReference type="Proteomes" id="UP000006548">
    <property type="component" value="Chromosome 2"/>
</dbReference>
<dbReference type="ExpressionAtlas" id="Q9SLD2">
    <property type="expression patterns" value="baseline and differential"/>
</dbReference>
<dbReference type="GO" id="GO:0009941">
    <property type="term" value="C:chloroplast envelope"/>
    <property type="evidence" value="ECO:0000314"/>
    <property type="project" value="TAIR"/>
</dbReference>
<dbReference type="GO" id="GO:0031969">
    <property type="term" value="C:chloroplast membrane"/>
    <property type="evidence" value="ECO:0007669"/>
    <property type="project" value="UniProtKB-SubCell"/>
</dbReference>
<dbReference type="GO" id="GO:0005789">
    <property type="term" value="C:endoplasmic reticulum membrane"/>
    <property type="evidence" value="ECO:0007669"/>
    <property type="project" value="UniProtKB-SubCell"/>
</dbReference>
<dbReference type="GO" id="GO:0005811">
    <property type="term" value="C:lipid droplet"/>
    <property type="evidence" value="ECO:0000314"/>
    <property type="project" value="TAIR"/>
</dbReference>
<dbReference type="GO" id="GO:0016020">
    <property type="term" value="C:membrane"/>
    <property type="evidence" value="ECO:0000314"/>
    <property type="project" value="TAIR"/>
</dbReference>
<dbReference type="GO" id="GO:0004144">
    <property type="term" value="F:diacylglycerol O-acyltransferase activity"/>
    <property type="evidence" value="ECO:0000314"/>
    <property type="project" value="TAIR"/>
</dbReference>
<dbReference type="GO" id="GO:0005975">
    <property type="term" value="P:carbohydrate metabolic process"/>
    <property type="evidence" value="ECO:0000315"/>
    <property type="project" value="TAIR"/>
</dbReference>
<dbReference type="GO" id="GO:0009793">
    <property type="term" value="P:embryo development ending in seed dormancy"/>
    <property type="evidence" value="ECO:0000304"/>
    <property type="project" value="TAIR"/>
</dbReference>
<dbReference type="GO" id="GO:0006071">
    <property type="term" value="P:glycerol metabolic process"/>
    <property type="evidence" value="ECO:0007669"/>
    <property type="project" value="UniProtKB-KW"/>
</dbReference>
<dbReference type="GO" id="GO:0010030">
    <property type="term" value="P:positive regulation of seed germination"/>
    <property type="evidence" value="ECO:0000315"/>
    <property type="project" value="TAIR"/>
</dbReference>
<dbReference type="GO" id="GO:0045995">
    <property type="term" value="P:regulation of embryonic development"/>
    <property type="evidence" value="ECO:0000315"/>
    <property type="project" value="TAIR"/>
</dbReference>
<dbReference type="GO" id="GO:0010029">
    <property type="term" value="P:regulation of seed germination"/>
    <property type="evidence" value="ECO:0000315"/>
    <property type="project" value="TAIR"/>
</dbReference>
<dbReference type="GO" id="GO:0009737">
    <property type="term" value="P:response to abscisic acid"/>
    <property type="evidence" value="ECO:0000315"/>
    <property type="project" value="TAIR"/>
</dbReference>
<dbReference type="GO" id="GO:0009409">
    <property type="term" value="P:response to cold"/>
    <property type="evidence" value="ECO:0000315"/>
    <property type="project" value="TAIR"/>
</dbReference>
<dbReference type="GO" id="GO:0009749">
    <property type="term" value="P:response to glucose"/>
    <property type="evidence" value="ECO:0000315"/>
    <property type="project" value="TAIR"/>
</dbReference>
<dbReference type="GO" id="GO:0009651">
    <property type="term" value="P:response to salt stress"/>
    <property type="evidence" value="ECO:0000315"/>
    <property type="project" value="TAIR"/>
</dbReference>
<dbReference type="GO" id="GO:0019432">
    <property type="term" value="P:triglyceride biosynthetic process"/>
    <property type="evidence" value="ECO:0000314"/>
    <property type="project" value="TAIR"/>
</dbReference>
<dbReference type="InterPro" id="IPR027251">
    <property type="entry name" value="Diacylglycerol_acylTrfase1"/>
</dbReference>
<dbReference type="InterPro" id="IPR004299">
    <property type="entry name" value="MBOAT_fam"/>
</dbReference>
<dbReference type="InterPro" id="IPR014371">
    <property type="entry name" value="Oat_ACAT_DAG_ARE"/>
</dbReference>
<dbReference type="PANTHER" id="PTHR10408:SF7">
    <property type="entry name" value="DIACYLGLYCEROL O-ACYLTRANSFERASE 1"/>
    <property type="match status" value="1"/>
</dbReference>
<dbReference type="PANTHER" id="PTHR10408">
    <property type="entry name" value="STEROL O-ACYLTRANSFERASE"/>
    <property type="match status" value="1"/>
</dbReference>
<dbReference type="Pfam" id="PF03062">
    <property type="entry name" value="MBOAT"/>
    <property type="match status" value="1"/>
</dbReference>
<dbReference type="PIRSF" id="PIRSF000439">
    <property type="entry name" value="Oat_ACAT_DAG_ARE"/>
    <property type="match status" value="1"/>
</dbReference>
<dbReference type="PIRSF" id="PIRSF500231">
    <property type="entry name" value="Oat_dag"/>
    <property type="match status" value="1"/>
</dbReference>
<proteinExistence type="evidence at protein level"/>
<organism>
    <name type="scientific">Arabidopsis thaliana</name>
    <name type="common">Mouse-ear cress</name>
    <dbReference type="NCBI Taxonomy" id="3702"/>
    <lineage>
        <taxon>Eukaryota</taxon>
        <taxon>Viridiplantae</taxon>
        <taxon>Streptophyta</taxon>
        <taxon>Embryophyta</taxon>
        <taxon>Tracheophyta</taxon>
        <taxon>Spermatophyta</taxon>
        <taxon>Magnoliopsida</taxon>
        <taxon>eudicotyledons</taxon>
        <taxon>Gunneridae</taxon>
        <taxon>Pentapetalae</taxon>
        <taxon>rosids</taxon>
        <taxon>malvids</taxon>
        <taxon>Brassicales</taxon>
        <taxon>Brassicaceae</taxon>
        <taxon>Camelineae</taxon>
        <taxon>Arabidopsis</taxon>
    </lineage>
</organism>
<reference key="1">
    <citation type="journal article" date="1999" name="FEBS Lett.">
        <title>Cloning of a cDNA encoding diacylglycerol acyltransferase from Arabidopsis thaliana and its functional expression.</title>
        <authorList>
            <person name="Hobbs D.H."/>
            <person name="Lu C."/>
            <person name="Hills M.J."/>
        </authorList>
    </citation>
    <scope>NUCLEOTIDE SEQUENCE [MRNA]</scope>
    <scope>CATALYTIC ACTIVITY</scope>
    <source>
        <strain>cv. Columbia</strain>
    </source>
</reference>
<reference key="2">
    <citation type="journal article" date="1999" name="Plant J.">
        <title>The Arabidopsis thaliana TAG1 mutant has a mutation in a diacylglycerol acyltransferase gene.</title>
        <authorList>
            <person name="Zou J."/>
            <person name="Wei Y."/>
            <person name="Jako C."/>
            <person name="Kumar A."/>
            <person name="Selvaraj G."/>
            <person name="Taylor D.C."/>
        </authorList>
    </citation>
    <scope>NUCLEOTIDE SEQUENCE [MRNA]</scope>
    <scope>FUNCTION</scope>
    <scope>MUTAGENESIS OF GLN-130</scope>
    <scope>TISSUE SPECIFICITY</scope>
</reference>
<reference key="3">
    <citation type="journal article" date="1999" name="Plant Physiol. Biochem.">
        <title>The TAG1 locus of Arabidopsis encodes for a diacylglycerol acyltransferase.</title>
        <authorList>
            <person name="Routaboul J.M."/>
            <person name="Benning C."/>
            <person name="Bechtold N."/>
            <person name="Caboche M."/>
            <person name="Lepiniec L."/>
        </authorList>
    </citation>
    <scope>NUCLEOTIDE SEQUENCE [MRNA]</scope>
    <scope>FUNCTION</scope>
</reference>
<reference key="4">
    <citation type="journal article" date="2000" name="Eur. J. Biochem.">
        <title>Expression in yeast and tobacco of plant cDNAs encoding acyl CoA:diacylglycerol acyltransferase.</title>
        <authorList>
            <person name="Bouvier-Nave P."/>
            <person name="Benveniste P."/>
            <person name="Oelkers P."/>
            <person name="Sturley S.L."/>
            <person name="Schaller H."/>
        </authorList>
    </citation>
    <scope>NUCLEOTIDE SEQUENCE [MRNA]</scope>
    <scope>FUNCTION</scope>
    <source>
        <strain>cv. Columbia</strain>
    </source>
</reference>
<reference key="5">
    <citation type="journal article" date="1999" name="Nature">
        <title>Sequence and analysis of chromosome 2 of the plant Arabidopsis thaliana.</title>
        <authorList>
            <person name="Lin X."/>
            <person name="Kaul S."/>
            <person name="Rounsley S.D."/>
            <person name="Shea T.P."/>
            <person name="Benito M.-I."/>
            <person name="Town C.D."/>
            <person name="Fujii C.Y."/>
            <person name="Mason T.M."/>
            <person name="Bowman C.L."/>
            <person name="Barnstead M.E."/>
            <person name="Feldblyum T.V."/>
            <person name="Buell C.R."/>
            <person name="Ketchum K.A."/>
            <person name="Lee J.J."/>
            <person name="Ronning C.M."/>
            <person name="Koo H.L."/>
            <person name="Moffat K.S."/>
            <person name="Cronin L.A."/>
            <person name="Shen M."/>
            <person name="Pai G."/>
            <person name="Van Aken S."/>
            <person name="Umayam L."/>
            <person name="Tallon L.J."/>
            <person name="Gill J.E."/>
            <person name="Adams M.D."/>
            <person name="Carrera A.J."/>
            <person name="Creasy T.H."/>
            <person name="Goodman H.M."/>
            <person name="Somerville C.R."/>
            <person name="Copenhaver G.P."/>
            <person name="Preuss D."/>
            <person name="Nierman W.C."/>
            <person name="White O."/>
            <person name="Eisen J.A."/>
            <person name="Salzberg S.L."/>
            <person name="Fraser C.M."/>
            <person name="Venter J.C."/>
        </authorList>
    </citation>
    <scope>NUCLEOTIDE SEQUENCE [LARGE SCALE GENOMIC DNA]</scope>
    <source>
        <strain>cv. Columbia</strain>
    </source>
</reference>
<reference key="6">
    <citation type="journal article" date="2017" name="Plant J.">
        <title>Araport11: a complete reannotation of the Arabidopsis thaliana reference genome.</title>
        <authorList>
            <person name="Cheng C.Y."/>
            <person name="Krishnakumar V."/>
            <person name="Chan A.P."/>
            <person name="Thibaud-Nissen F."/>
            <person name="Schobel S."/>
            <person name="Town C.D."/>
        </authorList>
    </citation>
    <scope>GENOME REANNOTATION</scope>
    <source>
        <strain>cv. Columbia</strain>
    </source>
</reference>
<reference key="7">
    <citation type="journal article" date="2003" name="Science">
        <title>Empirical analysis of transcriptional activity in the Arabidopsis genome.</title>
        <authorList>
            <person name="Yamada K."/>
            <person name="Lim J."/>
            <person name="Dale J.M."/>
            <person name="Chen H."/>
            <person name="Shinn P."/>
            <person name="Palm C.J."/>
            <person name="Southwick A.M."/>
            <person name="Wu H.C."/>
            <person name="Kim C.J."/>
            <person name="Nguyen M."/>
            <person name="Pham P.K."/>
            <person name="Cheuk R.F."/>
            <person name="Karlin-Newmann G."/>
            <person name="Liu S.X."/>
            <person name="Lam B."/>
            <person name="Sakano H."/>
            <person name="Wu T."/>
            <person name="Yu G."/>
            <person name="Miranda M."/>
            <person name="Quach H.L."/>
            <person name="Tripp M."/>
            <person name="Chang C.H."/>
            <person name="Lee J.M."/>
            <person name="Toriumi M.J."/>
            <person name="Chan M.M."/>
            <person name="Tang C.C."/>
            <person name="Onodera C.S."/>
            <person name="Deng J.M."/>
            <person name="Akiyama K."/>
            <person name="Ansari Y."/>
            <person name="Arakawa T."/>
            <person name="Banh J."/>
            <person name="Banno F."/>
            <person name="Bowser L."/>
            <person name="Brooks S.Y."/>
            <person name="Carninci P."/>
            <person name="Chao Q."/>
            <person name="Choy N."/>
            <person name="Enju A."/>
            <person name="Goldsmith A.D."/>
            <person name="Gurjal M."/>
            <person name="Hansen N.F."/>
            <person name="Hayashizaki Y."/>
            <person name="Johnson-Hopson C."/>
            <person name="Hsuan V.W."/>
            <person name="Iida K."/>
            <person name="Karnes M."/>
            <person name="Khan S."/>
            <person name="Koesema E."/>
            <person name="Ishida J."/>
            <person name="Jiang P.X."/>
            <person name="Jones T."/>
            <person name="Kawai J."/>
            <person name="Kamiya A."/>
            <person name="Meyers C."/>
            <person name="Nakajima M."/>
            <person name="Narusaka M."/>
            <person name="Seki M."/>
            <person name="Sakurai T."/>
            <person name="Satou M."/>
            <person name="Tamse R."/>
            <person name="Vaysberg M."/>
            <person name="Wallender E.K."/>
            <person name="Wong C."/>
            <person name="Yamamura Y."/>
            <person name="Yuan S."/>
            <person name="Shinozaki K."/>
            <person name="Davis R.W."/>
            <person name="Theologis A."/>
            <person name="Ecker J.R."/>
        </authorList>
    </citation>
    <scope>NUCLEOTIDE SEQUENCE [LARGE SCALE MRNA]</scope>
    <source>
        <strain>cv. Columbia</strain>
    </source>
</reference>
<reference key="8">
    <citation type="journal article" date="2000" name="Biochem. Soc. Trans.">
        <title>Expression and characterization of diacylglycerol acyltransferase from Arabidopsis thaliana in insect cell cultures.</title>
        <authorList>
            <person name="Hobbs D.H."/>
            <person name="Hills M.J."/>
        </authorList>
    </citation>
    <scope>CATALYTIC ACTIVITY</scope>
    <scope>BIOPHYSICOCHEMICAL PROPERTIES</scope>
    <scope>ACTIVITY REGULATION</scope>
</reference>
<reference key="9">
    <citation type="journal article" date="2001" name="Plant Physiol.">
        <title>Seed-specific over-expression of an Arabidopsis cDNA encoding a diacylglycerol acyltransferase enhances seed oil content and seed weight.</title>
        <authorList>
            <person name="Jako C."/>
            <person name="Kumar A."/>
            <person name="Wei Y."/>
            <person name="Zou J."/>
            <person name="Barton D.L."/>
            <person name="Giblin E.M."/>
            <person name="Covello P.S."/>
            <person name="Taylor D.C."/>
        </authorList>
    </citation>
    <scope>FUNCTION</scope>
</reference>
<reference key="10">
    <citation type="journal article" date="2002" name="Plant Physiol.">
        <title>A role for diacylglycerol acyltransferase during leaf senescence.</title>
        <authorList>
            <person name="Kaup M.T."/>
            <person name="Froese C.D."/>
            <person name="Thompson J.E."/>
        </authorList>
    </citation>
    <scope>DEVELOPMENTAL STAGE</scope>
    <scope>SUBCELLULAR LOCATION</scope>
</reference>
<reference key="11">
    <citation type="journal article" date="2002" name="Plant Physiol.">
        <title>Arabidopsis mutants deficient in diacylglycerol acyltransferase display increased sensitivity to abscisic acid, sugars, and osmotic stress during germination and seedling development.</title>
        <authorList>
            <person name="Lu C."/>
            <person name="Hills M.J."/>
        </authorList>
    </citation>
    <scope>FUNCTION</scope>
</reference>
<reference key="12">
    <citation type="journal article" date="2003" name="Plant Mol. Biol.">
        <title>Expression pattern of diacylglycerol acyltransferase-1, an enzyme involved in triacylglycerol biosynthesis, in Arabidopsis thaliana.</title>
        <authorList>
            <person name="Lu C.L."/>
            <person name="de Noyer S.B."/>
            <person name="Hobbs D.H."/>
            <person name="Kang J."/>
            <person name="Wen Y."/>
            <person name="Krachtus D."/>
            <person name="Hills M.J."/>
        </authorList>
    </citation>
    <scope>TISSUE SPECIFICITY</scope>
    <scope>INDUCTION BY GLUCOSE</scope>
</reference>
<reference key="13">
    <citation type="journal article" date="2009" name="Plant Cell">
        <title>DGAT1 and PDAT1 acyltransferases have overlapping functions in Arabidopsis triacylglycerol biosynthesis and are essential for normal pollen and seed development.</title>
        <authorList>
            <person name="Zhang M."/>
            <person name="Fan J."/>
            <person name="Taylor D.C."/>
            <person name="Ohlrogge J.B."/>
        </authorList>
    </citation>
    <scope>FUNCTION</scope>
    <scope>TISSUE SPECIFICITY</scope>
    <scope>DISRUPTION PHENOTYPE</scope>
</reference>
<reference key="14">
    <citation type="journal article" date="2010" name="Lipids">
        <title>DGAT1, DGAT2 and PDAT expression in seeds and other tissues of epoxy and hydroxy fatty acid accumulating plants.</title>
        <authorList>
            <person name="Li R."/>
            <person name="Yu K."/>
            <person name="Hildebrand D.F."/>
        </authorList>
    </citation>
    <scope>FUNCTION</scope>
    <scope>TISSUE SPECIFICITY</scope>
    <scope>DEVELOPMENTAL STAGE</scope>
</reference>
<reference key="15">
    <citation type="journal article" date="2013" name="FEBS Lett.">
        <title>ABA-insensitive (ABI) 4 and ABI5 synergistically regulate DGAT1 expression in Arabidopsis seedlings under stress.</title>
        <authorList>
            <person name="Kong Y."/>
            <person name="Chen S."/>
            <person name="Yang Y."/>
            <person name="An C."/>
        </authorList>
    </citation>
    <scope>INDUCTION</scope>
</reference>
<reference key="16">
    <citation type="journal article" date="2013" name="FEBS Lett.">
        <title>AtDGAT2 is a functional acyl-CoA:diacylglycerol acyltransferase and displays different acyl-CoA substrate preferences than AtDGAT1.</title>
        <authorList>
            <person name="Zhou X.R."/>
            <person name="Shrestha P."/>
            <person name="Yin F."/>
            <person name="Petrie J.R."/>
            <person name="Singh S.P."/>
        </authorList>
    </citation>
    <scope>FUNCTION</scope>
</reference>
<reference key="17">
    <citation type="journal article" date="2016" name="Plant Physiol.">
        <title>Identification of Arabidopsis GPAT9 (At5g60620) as an essential gene involved in triacylglycerol biosynthesis.</title>
        <authorList>
            <person name="Shockey J."/>
            <person name="Regmi A."/>
            <person name="Cotton K."/>
            <person name="Adhikari N."/>
            <person name="Browse J."/>
            <person name="Bates P.D."/>
        </authorList>
    </citation>
    <scope>INTERACTION WITH LPCAT2 AND LPAT2</scope>
    <source>
        <strain>cv. Columbia</strain>
    </source>
</reference>
<evidence type="ECO:0000250" key="1">
    <source>
        <dbReference type="UniProtKB" id="O75907"/>
    </source>
</evidence>
<evidence type="ECO:0000255" key="2"/>
<evidence type="ECO:0000256" key="3">
    <source>
        <dbReference type="SAM" id="MobiDB-lite"/>
    </source>
</evidence>
<evidence type="ECO:0000269" key="4">
    <source>
    </source>
</evidence>
<evidence type="ECO:0000269" key="5">
    <source>
    </source>
</evidence>
<evidence type="ECO:0000269" key="6">
    <source>
    </source>
</evidence>
<evidence type="ECO:0000269" key="7">
    <source>
    </source>
</evidence>
<evidence type="ECO:0000269" key="8">
    <source>
    </source>
</evidence>
<evidence type="ECO:0000269" key="9">
    <source>
    </source>
</evidence>
<evidence type="ECO:0000269" key="10">
    <source>
    </source>
</evidence>
<evidence type="ECO:0000269" key="11">
    <source>
    </source>
</evidence>
<evidence type="ECO:0000269" key="12">
    <source>
    </source>
</evidence>
<evidence type="ECO:0000269" key="13">
    <source>
    </source>
</evidence>
<evidence type="ECO:0000269" key="14">
    <source>
    </source>
</evidence>
<evidence type="ECO:0000269" key="15">
    <source>
    </source>
</evidence>
<evidence type="ECO:0000269" key="16">
    <source>
    </source>
</evidence>
<evidence type="ECO:0000269" key="17">
    <source>
    </source>
</evidence>
<evidence type="ECO:0000303" key="18">
    <source>
    </source>
</evidence>
<evidence type="ECO:0000303" key="19">
    <source>
    </source>
</evidence>
<evidence type="ECO:0000303" key="20">
    <source>
    </source>
</evidence>
<evidence type="ECO:0000303" key="21">
    <source>
    </source>
</evidence>
<evidence type="ECO:0000305" key="22"/>
<evidence type="ECO:0000312" key="23">
    <source>
        <dbReference type="EMBL" id="AAF19262.1"/>
    </source>
</evidence>
<accession>Q9SLD2</accession>
<accession>Q9S7F2</accession>
<gene>
    <name evidence="20" type="primary">DGAT1</name>
    <name evidence="19" type="synonym">ABX45</name>
    <name evidence="23" type="synonym">DAGAT</name>
    <name evidence="18 19" type="synonym">TAG1</name>
    <name type="ordered locus">At2g19450</name>
    <name type="ORF">F3P11.5</name>
</gene>